<reference key="1">
    <citation type="journal article" date="1993" name="Mol. Microbiol.">
        <title>Bacillus subtilis genome project: cloning and sequencing of the 97 kb region from 325 degrees to 333 degrees.</title>
        <authorList>
            <person name="Glaser P."/>
            <person name="Kunst F."/>
            <person name="Arnaud M."/>
            <person name="Coudart M.P."/>
            <person name="Gonzales W."/>
            <person name="Hullo M.-F."/>
            <person name="Ionescu M."/>
            <person name="Lubochinsky B."/>
            <person name="Marcelino L."/>
            <person name="Moszer I."/>
            <person name="Presecan E."/>
            <person name="Santana M."/>
            <person name="Schneider E."/>
            <person name="Schweizer J."/>
            <person name="Vertes A."/>
            <person name="Rapoport G."/>
            <person name="Danchin A."/>
        </authorList>
    </citation>
    <scope>NUCLEOTIDE SEQUENCE [GENOMIC DNA]</scope>
    <source>
        <strain>168</strain>
    </source>
</reference>
<reference key="2">
    <citation type="journal article" date="1997" name="Nature">
        <title>The complete genome sequence of the Gram-positive bacterium Bacillus subtilis.</title>
        <authorList>
            <person name="Kunst F."/>
            <person name="Ogasawara N."/>
            <person name="Moszer I."/>
            <person name="Albertini A.M."/>
            <person name="Alloni G."/>
            <person name="Azevedo V."/>
            <person name="Bertero M.G."/>
            <person name="Bessieres P."/>
            <person name="Bolotin A."/>
            <person name="Borchert S."/>
            <person name="Borriss R."/>
            <person name="Boursier L."/>
            <person name="Brans A."/>
            <person name="Braun M."/>
            <person name="Brignell S.C."/>
            <person name="Bron S."/>
            <person name="Brouillet S."/>
            <person name="Bruschi C.V."/>
            <person name="Caldwell B."/>
            <person name="Capuano V."/>
            <person name="Carter N.M."/>
            <person name="Choi S.-K."/>
            <person name="Codani J.-J."/>
            <person name="Connerton I.F."/>
            <person name="Cummings N.J."/>
            <person name="Daniel R.A."/>
            <person name="Denizot F."/>
            <person name="Devine K.M."/>
            <person name="Duesterhoeft A."/>
            <person name="Ehrlich S.D."/>
            <person name="Emmerson P.T."/>
            <person name="Entian K.-D."/>
            <person name="Errington J."/>
            <person name="Fabret C."/>
            <person name="Ferrari E."/>
            <person name="Foulger D."/>
            <person name="Fritz C."/>
            <person name="Fujita M."/>
            <person name="Fujita Y."/>
            <person name="Fuma S."/>
            <person name="Galizzi A."/>
            <person name="Galleron N."/>
            <person name="Ghim S.-Y."/>
            <person name="Glaser P."/>
            <person name="Goffeau A."/>
            <person name="Golightly E.J."/>
            <person name="Grandi G."/>
            <person name="Guiseppi G."/>
            <person name="Guy B.J."/>
            <person name="Haga K."/>
            <person name="Haiech J."/>
            <person name="Harwood C.R."/>
            <person name="Henaut A."/>
            <person name="Hilbert H."/>
            <person name="Holsappel S."/>
            <person name="Hosono S."/>
            <person name="Hullo M.-F."/>
            <person name="Itaya M."/>
            <person name="Jones L.-M."/>
            <person name="Joris B."/>
            <person name="Karamata D."/>
            <person name="Kasahara Y."/>
            <person name="Klaerr-Blanchard M."/>
            <person name="Klein C."/>
            <person name="Kobayashi Y."/>
            <person name="Koetter P."/>
            <person name="Koningstein G."/>
            <person name="Krogh S."/>
            <person name="Kumano M."/>
            <person name="Kurita K."/>
            <person name="Lapidus A."/>
            <person name="Lardinois S."/>
            <person name="Lauber J."/>
            <person name="Lazarevic V."/>
            <person name="Lee S.-M."/>
            <person name="Levine A."/>
            <person name="Liu H."/>
            <person name="Masuda S."/>
            <person name="Mauel C."/>
            <person name="Medigue C."/>
            <person name="Medina N."/>
            <person name="Mellado R.P."/>
            <person name="Mizuno M."/>
            <person name="Moestl D."/>
            <person name="Nakai S."/>
            <person name="Noback M."/>
            <person name="Noone D."/>
            <person name="O'Reilly M."/>
            <person name="Ogawa K."/>
            <person name="Ogiwara A."/>
            <person name="Oudega B."/>
            <person name="Park S.-H."/>
            <person name="Parro V."/>
            <person name="Pohl T.M."/>
            <person name="Portetelle D."/>
            <person name="Porwollik S."/>
            <person name="Prescott A.M."/>
            <person name="Presecan E."/>
            <person name="Pujic P."/>
            <person name="Purnelle B."/>
            <person name="Rapoport G."/>
            <person name="Rey M."/>
            <person name="Reynolds S."/>
            <person name="Rieger M."/>
            <person name="Rivolta C."/>
            <person name="Rocha E."/>
            <person name="Roche B."/>
            <person name="Rose M."/>
            <person name="Sadaie Y."/>
            <person name="Sato T."/>
            <person name="Scanlan E."/>
            <person name="Schleich S."/>
            <person name="Schroeter R."/>
            <person name="Scoffone F."/>
            <person name="Sekiguchi J."/>
            <person name="Sekowska A."/>
            <person name="Seror S.J."/>
            <person name="Serror P."/>
            <person name="Shin B.-S."/>
            <person name="Soldo B."/>
            <person name="Sorokin A."/>
            <person name="Tacconi E."/>
            <person name="Takagi T."/>
            <person name="Takahashi H."/>
            <person name="Takemaru K."/>
            <person name="Takeuchi M."/>
            <person name="Tamakoshi A."/>
            <person name="Tanaka T."/>
            <person name="Terpstra P."/>
            <person name="Tognoni A."/>
            <person name="Tosato V."/>
            <person name="Uchiyama S."/>
            <person name="Vandenbol M."/>
            <person name="Vannier F."/>
            <person name="Vassarotti A."/>
            <person name="Viari A."/>
            <person name="Wambutt R."/>
            <person name="Wedler E."/>
            <person name="Wedler H."/>
            <person name="Weitzenegger T."/>
            <person name="Winters P."/>
            <person name="Wipat A."/>
            <person name="Yamamoto H."/>
            <person name="Yamane K."/>
            <person name="Yasumoto K."/>
            <person name="Yata K."/>
            <person name="Yoshida K."/>
            <person name="Yoshikawa H.-F."/>
            <person name="Zumstein E."/>
            <person name="Yoshikawa H."/>
            <person name="Danchin A."/>
        </authorList>
    </citation>
    <scope>NUCLEOTIDE SEQUENCE [LARGE SCALE GENOMIC DNA]</scope>
    <source>
        <strain>168</strain>
    </source>
</reference>
<accession>P39600</accession>
<feature type="chain" id="PRO_0000049956" description="Uncharacterized protein YwcB">
    <location>
        <begin position="1"/>
        <end position="102"/>
    </location>
</feature>
<feature type="transmembrane region" description="Helical" evidence="1">
    <location>
        <begin position="24"/>
        <end position="44"/>
    </location>
</feature>
<feature type="transmembrane region" description="Helical" evidence="1">
    <location>
        <begin position="55"/>
        <end position="75"/>
    </location>
</feature>
<keyword id="KW-1003">Cell membrane</keyword>
<keyword id="KW-0472">Membrane</keyword>
<keyword id="KW-1185">Reference proteome</keyword>
<keyword id="KW-0812">Transmembrane</keyword>
<keyword id="KW-1133">Transmembrane helix</keyword>
<sequence>MYKADYKQIAATPSFQAFLKQKRAFIVPSAIFFFVFYFSLPVLTSYFTFLNAPAIGAVSWAWLFAIAQFAMTWILSTVYSRRAAHFDKYVSALKEDLKGEQT</sequence>
<gene>
    <name type="primary">ywcB</name>
    <name type="ordered locus">BSU38230</name>
    <name type="ORF">ipa-32r</name>
</gene>
<dbReference type="EMBL" id="X73124">
    <property type="protein sequence ID" value="CAA51588.1"/>
    <property type="molecule type" value="Genomic_DNA"/>
</dbReference>
<dbReference type="EMBL" id="AL009126">
    <property type="protein sequence ID" value="CAB15849.1"/>
    <property type="molecule type" value="Genomic_DNA"/>
</dbReference>
<dbReference type="PIR" id="S39687">
    <property type="entry name" value="S39687"/>
</dbReference>
<dbReference type="RefSeq" id="WP_003227392.1">
    <property type="nucleotide sequence ID" value="NZ_OZ025638.1"/>
</dbReference>
<dbReference type="FunCoup" id="P39600">
    <property type="interactions" value="38"/>
</dbReference>
<dbReference type="STRING" id="224308.BSU38230"/>
<dbReference type="PaxDb" id="224308-BSU38230"/>
<dbReference type="EnsemblBacteria" id="CAB15849">
    <property type="protein sequence ID" value="CAB15849"/>
    <property type="gene ID" value="BSU_38230"/>
</dbReference>
<dbReference type="GeneID" id="937304"/>
<dbReference type="KEGG" id="bsu:BSU38230"/>
<dbReference type="PATRIC" id="fig|224308.179.peg.4139"/>
<dbReference type="eggNOG" id="COG3162">
    <property type="taxonomic scope" value="Bacteria"/>
</dbReference>
<dbReference type="InParanoid" id="P39600"/>
<dbReference type="OrthoDB" id="2886991at2"/>
<dbReference type="PhylomeDB" id="P39600"/>
<dbReference type="BioCyc" id="BSUB:BSU38230-MONOMER"/>
<dbReference type="Proteomes" id="UP000001570">
    <property type="component" value="Chromosome"/>
</dbReference>
<dbReference type="GO" id="GO:0005886">
    <property type="term" value="C:plasma membrane"/>
    <property type="evidence" value="ECO:0007669"/>
    <property type="project" value="UniProtKB-SubCell"/>
</dbReference>
<dbReference type="InterPro" id="IPR007436">
    <property type="entry name" value="DUF485"/>
</dbReference>
<dbReference type="PANTHER" id="PTHR38441">
    <property type="entry name" value="INTEGRAL MEMBRANE PROTEIN-RELATED"/>
    <property type="match status" value="1"/>
</dbReference>
<dbReference type="PANTHER" id="PTHR38441:SF1">
    <property type="entry name" value="MEMBRANE PROTEIN"/>
    <property type="match status" value="1"/>
</dbReference>
<dbReference type="Pfam" id="PF04341">
    <property type="entry name" value="DUF485"/>
    <property type="match status" value="1"/>
</dbReference>
<organism>
    <name type="scientific">Bacillus subtilis (strain 168)</name>
    <dbReference type="NCBI Taxonomy" id="224308"/>
    <lineage>
        <taxon>Bacteria</taxon>
        <taxon>Bacillati</taxon>
        <taxon>Bacillota</taxon>
        <taxon>Bacilli</taxon>
        <taxon>Bacillales</taxon>
        <taxon>Bacillaceae</taxon>
        <taxon>Bacillus</taxon>
    </lineage>
</organism>
<name>YWCB_BACSU</name>
<evidence type="ECO:0000255" key="1"/>
<evidence type="ECO:0000305" key="2"/>
<protein>
    <recommendedName>
        <fullName>Uncharacterized protein YwcB</fullName>
    </recommendedName>
</protein>
<proteinExistence type="predicted"/>
<comment type="subcellular location">
    <subcellularLocation>
        <location evidence="2">Cell membrane</location>
        <topology evidence="2">Multi-pass membrane protein</topology>
    </subcellularLocation>
</comment>